<geneLocation type="chloroplast"/>
<evidence type="ECO:0000255" key="1">
    <source>
        <dbReference type="HAMAP-Rule" id="MF_01367"/>
    </source>
</evidence>
<evidence type="ECO:0000305" key="2"/>
<gene>
    <name evidence="1" type="primary">rpl14</name>
</gene>
<proteinExistence type="inferred from homology"/>
<keyword id="KW-0150">Chloroplast</keyword>
<keyword id="KW-0934">Plastid</keyword>
<keyword id="KW-0687">Ribonucleoprotein</keyword>
<keyword id="KW-0689">Ribosomal protein</keyword>
<keyword id="KW-0694">RNA-binding</keyword>
<keyword id="KW-0699">rRNA-binding</keyword>
<sequence length="122" mass="13583">MIQPQTHLNVADNSGARELMCIRIIGASNRRYAHIGDVIVAVIKDAVPNMPLERSEVVRAVIVRTCKELKRDNGMIIRYDDNAAVVIDQEGNPKGTRVFGAIARELRQFNFTKIVSLAPEVL</sequence>
<name>RK14_HELAN</name>
<dbReference type="EMBL" id="DQ383815">
    <property type="protein sequence ID" value="ABD47182.1"/>
    <property type="molecule type" value="Genomic_DNA"/>
</dbReference>
<dbReference type="RefSeq" id="YP_588154.1">
    <property type="nucleotide sequence ID" value="NC_007977.1"/>
</dbReference>
<dbReference type="SMR" id="Q1KXS2"/>
<dbReference type="GeneID" id="4055696"/>
<dbReference type="KEGG" id="han:4055696"/>
<dbReference type="OrthoDB" id="274765at2759"/>
<dbReference type="GO" id="GO:0009507">
    <property type="term" value="C:chloroplast"/>
    <property type="evidence" value="ECO:0007669"/>
    <property type="project" value="UniProtKB-SubCell"/>
</dbReference>
<dbReference type="GO" id="GO:0015934">
    <property type="term" value="C:large ribosomal subunit"/>
    <property type="evidence" value="ECO:0007669"/>
    <property type="project" value="InterPro"/>
</dbReference>
<dbReference type="GO" id="GO:0019843">
    <property type="term" value="F:rRNA binding"/>
    <property type="evidence" value="ECO:0007669"/>
    <property type="project" value="UniProtKB-UniRule"/>
</dbReference>
<dbReference type="GO" id="GO:0003735">
    <property type="term" value="F:structural constituent of ribosome"/>
    <property type="evidence" value="ECO:0007669"/>
    <property type="project" value="InterPro"/>
</dbReference>
<dbReference type="GO" id="GO:0006412">
    <property type="term" value="P:translation"/>
    <property type="evidence" value="ECO:0007669"/>
    <property type="project" value="UniProtKB-UniRule"/>
</dbReference>
<dbReference type="CDD" id="cd00337">
    <property type="entry name" value="Ribosomal_uL14"/>
    <property type="match status" value="1"/>
</dbReference>
<dbReference type="FunFam" id="2.40.150.20:FF:000002">
    <property type="entry name" value="50S ribosomal protein L14, chloroplastic"/>
    <property type="match status" value="1"/>
</dbReference>
<dbReference type="Gene3D" id="2.40.150.20">
    <property type="entry name" value="Ribosomal protein L14"/>
    <property type="match status" value="1"/>
</dbReference>
<dbReference type="HAMAP" id="MF_01367">
    <property type="entry name" value="Ribosomal_uL14"/>
    <property type="match status" value="1"/>
</dbReference>
<dbReference type="InterPro" id="IPR000218">
    <property type="entry name" value="Ribosomal_uL14"/>
</dbReference>
<dbReference type="InterPro" id="IPR005745">
    <property type="entry name" value="Ribosomal_uL14_bac-type"/>
</dbReference>
<dbReference type="InterPro" id="IPR019972">
    <property type="entry name" value="Ribosomal_uL14_CS"/>
</dbReference>
<dbReference type="InterPro" id="IPR036853">
    <property type="entry name" value="Ribosomal_uL14_sf"/>
</dbReference>
<dbReference type="NCBIfam" id="TIGR01067">
    <property type="entry name" value="rplN_bact"/>
    <property type="match status" value="1"/>
</dbReference>
<dbReference type="PANTHER" id="PTHR11761">
    <property type="entry name" value="50S/60S RIBOSOMAL PROTEIN L14/L23"/>
    <property type="match status" value="1"/>
</dbReference>
<dbReference type="PANTHER" id="PTHR11761:SF3">
    <property type="entry name" value="LARGE RIBOSOMAL SUBUNIT PROTEIN UL14M"/>
    <property type="match status" value="1"/>
</dbReference>
<dbReference type="Pfam" id="PF00238">
    <property type="entry name" value="Ribosomal_L14"/>
    <property type="match status" value="1"/>
</dbReference>
<dbReference type="SMART" id="SM01374">
    <property type="entry name" value="Ribosomal_L14"/>
    <property type="match status" value="1"/>
</dbReference>
<dbReference type="SUPFAM" id="SSF50193">
    <property type="entry name" value="Ribosomal protein L14"/>
    <property type="match status" value="1"/>
</dbReference>
<dbReference type="PROSITE" id="PS00049">
    <property type="entry name" value="RIBOSOMAL_L14"/>
    <property type="match status" value="1"/>
</dbReference>
<reference key="1">
    <citation type="submission" date="2006-01" db="EMBL/GenBank/DDBJ databases">
        <title>A comparison of the first two published chloroplast genomes in Asteraceae: Lactuca and Helianthus.</title>
        <authorList>
            <person name="Timme R.E."/>
            <person name="Kuehl J.V."/>
            <person name="Boore J.L."/>
            <person name="Jansen R.K."/>
        </authorList>
    </citation>
    <scope>NUCLEOTIDE SEQUENCE [LARGE SCALE GENOMIC DNA]</scope>
    <source>
        <strain>cv. HA383</strain>
    </source>
</reference>
<feature type="chain" id="PRO_0000276348" description="Large ribosomal subunit protein uL14c">
    <location>
        <begin position="1"/>
        <end position="122"/>
    </location>
</feature>
<organism>
    <name type="scientific">Helianthus annuus</name>
    <name type="common">Common sunflower</name>
    <dbReference type="NCBI Taxonomy" id="4232"/>
    <lineage>
        <taxon>Eukaryota</taxon>
        <taxon>Viridiplantae</taxon>
        <taxon>Streptophyta</taxon>
        <taxon>Embryophyta</taxon>
        <taxon>Tracheophyta</taxon>
        <taxon>Spermatophyta</taxon>
        <taxon>Magnoliopsida</taxon>
        <taxon>eudicotyledons</taxon>
        <taxon>Gunneridae</taxon>
        <taxon>Pentapetalae</taxon>
        <taxon>asterids</taxon>
        <taxon>campanulids</taxon>
        <taxon>Asterales</taxon>
        <taxon>Asteraceae</taxon>
        <taxon>Asteroideae</taxon>
        <taxon>Heliantheae alliance</taxon>
        <taxon>Heliantheae</taxon>
        <taxon>Helianthus</taxon>
    </lineage>
</organism>
<comment type="function">
    <text evidence="1">Binds to 23S rRNA.</text>
</comment>
<comment type="subunit">
    <text evidence="1">Part of the 50S ribosomal subunit.</text>
</comment>
<comment type="subcellular location">
    <subcellularLocation>
        <location>Plastid</location>
        <location>Chloroplast</location>
    </subcellularLocation>
</comment>
<comment type="similarity">
    <text evidence="1">Belongs to the universal ribosomal protein uL14 family.</text>
</comment>
<protein>
    <recommendedName>
        <fullName evidence="1">Large ribosomal subunit protein uL14c</fullName>
    </recommendedName>
    <alternativeName>
        <fullName evidence="2">50S ribosomal protein L14, chloroplastic</fullName>
    </alternativeName>
</protein>
<accession>Q1KXS2</accession>